<protein>
    <recommendedName>
        <fullName evidence="1">Large ribosomal subunit protein uL24</fullName>
    </recommendedName>
    <alternativeName>
        <fullName evidence="2">50S ribosomal protein L24</fullName>
    </alternativeName>
</protein>
<organism>
    <name type="scientific">Chlorobaculum tepidum (strain ATCC 49652 / DSM 12025 / NBRC 103806 / TLS)</name>
    <name type="common">Chlorobium tepidum</name>
    <dbReference type="NCBI Taxonomy" id="194439"/>
    <lineage>
        <taxon>Bacteria</taxon>
        <taxon>Pseudomonadati</taxon>
        <taxon>Chlorobiota</taxon>
        <taxon>Chlorobiia</taxon>
        <taxon>Chlorobiales</taxon>
        <taxon>Chlorobiaceae</taxon>
        <taxon>Chlorobaculum</taxon>
    </lineage>
</organism>
<sequence length="80" mass="8969">MKTGIKKVKLHVRKNDEVTVIAGNDKGKSGKVLKVFPQKGRVIVEGVNIRKRHMRPTQGMPQGAIIEREFPIHVSNVKKS</sequence>
<keyword id="KW-1185">Reference proteome</keyword>
<keyword id="KW-0687">Ribonucleoprotein</keyword>
<keyword id="KW-0689">Ribosomal protein</keyword>
<keyword id="KW-0694">RNA-binding</keyword>
<keyword id="KW-0699">rRNA-binding</keyword>
<reference key="1">
    <citation type="journal article" date="2002" name="Proc. Natl. Acad. Sci. U.S.A.">
        <title>The complete genome sequence of Chlorobium tepidum TLS, a photosynthetic, anaerobic, green-sulfur bacterium.</title>
        <authorList>
            <person name="Eisen J.A."/>
            <person name="Nelson K.E."/>
            <person name="Paulsen I.T."/>
            <person name="Heidelberg J.F."/>
            <person name="Wu M."/>
            <person name="Dodson R.J."/>
            <person name="DeBoy R.T."/>
            <person name="Gwinn M.L."/>
            <person name="Nelson W.C."/>
            <person name="Haft D.H."/>
            <person name="Hickey E.K."/>
            <person name="Peterson J.D."/>
            <person name="Durkin A.S."/>
            <person name="Kolonay J.F."/>
            <person name="Yang F."/>
            <person name="Holt I.E."/>
            <person name="Umayam L.A."/>
            <person name="Mason T.M."/>
            <person name="Brenner M."/>
            <person name="Shea T.P."/>
            <person name="Parksey D.S."/>
            <person name="Nierman W.C."/>
            <person name="Feldblyum T.V."/>
            <person name="Hansen C.L."/>
            <person name="Craven M.B."/>
            <person name="Radune D."/>
            <person name="Vamathevan J.J."/>
            <person name="Khouri H.M."/>
            <person name="White O."/>
            <person name="Gruber T.M."/>
            <person name="Ketchum K.A."/>
            <person name="Venter J.C."/>
            <person name="Tettelin H."/>
            <person name="Bryant D.A."/>
            <person name="Fraser C.M."/>
        </authorList>
    </citation>
    <scope>NUCLEOTIDE SEQUENCE [LARGE SCALE GENOMIC DNA]</scope>
    <source>
        <strain>ATCC 49652 / DSM 12025 / NBRC 103806 / TLS</strain>
    </source>
</reference>
<accession>Q8KAI3</accession>
<comment type="function">
    <text evidence="1">One of two assembly initiator proteins, it binds directly to the 5'-end of the 23S rRNA, where it nucleates assembly of the 50S subunit.</text>
</comment>
<comment type="function">
    <text evidence="1">One of the proteins that surrounds the polypeptide exit tunnel on the outside of the subunit.</text>
</comment>
<comment type="subunit">
    <text evidence="1">Part of the 50S ribosomal subunit.</text>
</comment>
<comment type="similarity">
    <text evidence="1">Belongs to the universal ribosomal protein uL24 family.</text>
</comment>
<feature type="chain" id="PRO_0000130643" description="Large ribosomal subunit protein uL24">
    <location>
        <begin position="1"/>
        <end position="80"/>
    </location>
</feature>
<name>RL24_CHLTE</name>
<dbReference type="EMBL" id="AE006470">
    <property type="protein sequence ID" value="AAM73394.1"/>
    <property type="molecule type" value="Genomic_DNA"/>
</dbReference>
<dbReference type="RefSeq" id="NP_663052.1">
    <property type="nucleotide sequence ID" value="NC_002932.3"/>
</dbReference>
<dbReference type="RefSeq" id="WP_010933831.1">
    <property type="nucleotide sequence ID" value="NC_002932.3"/>
</dbReference>
<dbReference type="SMR" id="Q8KAI3"/>
<dbReference type="STRING" id="194439.CT2178"/>
<dbReference type="EnsemblBacteria" id="AAM73394">
    <property type="protein sequence ID" value="AAM73394"/>
    <property type="gene ID" value="CT2178"/>
</dbReference>
<dbReference type="KEGG" id="cte:CT2178"/>
<dbReference type="PATRIC" id="fig|194439.7.peg.1977"/>
<dbReference type="eggNOG" id="COG0198">
    <property type="taxonomic scope" value="Bacteria"/>
</dbReference>
<dbReference type="HOGENOM" id="CLU_093315_3_0_10"/>
<dbReference type="OrthoDB" id="9807419at2"/>
<dbReference type="Proteomes" id="UP000001007">
    <property type="component" value="Chromosome"/>
</dbReference>
<dbReference type="GO" id="GO:1990904">
    <property type="term" value="C:ribonucleoprotein complex"/>
    <property type="evidence" value="ECO:0007669"/>
    <property type="project" value="UniProtKB-KW"/>
</dbReference>
<dbReference type="GO" id="GO:0005840">
    <property type="term" value="C:ribosome"/>
    <property type="evidence" value="ECO:0007669"/>
    <property type="project" value="UniProtKB-KW"/>
</dbReference>
<dbReference type="GO" id="GO:0019843">
    <property type="term" value="F:rRNA binding"/>
    <property type="evidence" value="ECO:0007669"/>
    <property type="project" value="UniProtKB-UniRule"/>
</dbReference>
<dbReference type="GO" id="GO:0003735">
    <property type="term" value="F:structural constituent of ribosome"/>
    <property type="evidence" value="ECO:0007669"/>
    <property type="project" value="InterPro"/>
</dbReference>
<dbReference type="GO" id="GO:0006412">
    <property type="term" value="P:translation"/>
    <property type="evidence" value="ECO:0007669"/>
    <property type="project" value="UniProtKB-UniRule"/>
</dbReference>
<dbReference type="CDD" id="cd06089">
    <property type="entry name" value="KOW_RPL26"/>
    <property type="match status" value="1"/>
</dbReference>
<dbReference type="Gene3D" id="2.30.30.30">
    <property type="match status" value="1"/>
</dbReference>
<dbReference type="HAMAP" id="MF_01326_B">
    <property type="entry name" value="Ribosomal_uL24_B"/>
    <property type="match status" value="1"/>
</dbReference>
<dbReference type="InterPro" id="IPR005824">
    <property type="entry name" value="KOW"/>
</dbReference>
<dbReference type="InterPro" id="IPR014722">
    <property type="entry name" value="Rib_uL2_dom2"/>
</dbReference>
<dbReference type="InterPro" id="IPR003256">
    <property type="entry name" value="Ribosomal_uL24"/>
</dbReference>
<dbReference type="InterPro" id="IPR005825">
    <property type="entry name" value="Ribosomal_uL24_CS"/>
</dbReference>
<dbReference type="InterPro" id="IPR041988">
    <property type="entry name" value="Ribosomal_uL24_KOW"/>
</dbReference>
<dbReference type="InterPro" id="IPR008991">
    <property type="entry name" value="Translation_prot_SH3-like_sf"/>
</dbReference>
<dbReference type="NCBIfam" id="TIGR01079">
    <property type="entry name" value="rplX_bact"/>
    <property type="match status" value="1"/>
</dbReference>
<dbReference type="PANTHER" id="PTHR12903">
    <property type="entry name" value="MITOCHONDRIAL RIBOSOMAL PROTEIN L24"/>
    <property type="match status" value="1"/>
</dbReference>
<dbReference type="Pfam" id="PF00467">
    <property type="entry name" value="KOW"/>
    <property type="match status" value="1"/>
</dbReference>
<dbReference type="Pfam" id="PF17136">
    <property type="entry name" value="ribosomal_L24"/>
    <property type="match status" value="1"/>
</dbReference>
<dbReference type="SMART" id="SM00739">
    <property type="entry name" value="KOW"/>
    <property type="match status" value="1"/>
</dbReference>
<dbReference type="SUPFAM" id="SSF50104">
    <property type="entry name" value="Translation proteins SH3-like domain"/>
    <property type="match status" value="1"/>
</dbReference>
<dbReference type="PROSITE" id="PS01108">
    <property type="entry name" value="RIBOSOMAL_L24"/>
    <property type="match status" value="1"/>
</dbReference>
<proteinExistence type="inferred from homology"/>
<gene>
    <name evidence="1" type="primary">rplX</name>
    <name type="ordered locus">CT2178</name>
</gene>
<evidence type="ECO:0000255" key="1">
    <source>
        <dbReference type="HAMAP-Rule" id="MF_01326"/>
    </source>
</evidence>
<evidence type="ECO:0000305" key="2"/>